<organism>
    <name type="scientific">Brucella abortus (strain 2308)</name>
    <dbReference type="NCBI Taxonomy" id="359391"/>
    <lineage>
        <taxon>Bacteria</taxon>
        <taxon>Pseudomonadati</taxon>
        <taxon>Pseudomonadota</taxon>
        <taxon>Alphaproteobacteria</taxon>
        <taxon>Hyphomicrobiales</taxon>
        <taxon>Brucellaceae</taxon>
        <taxon>Brucella/Ochrobactrum group</taxon>
        <taxon>Brucella</taxon>
    </lineage>
</organism>
<proteinExistence type="inferred from homology"/>
<comment type="function">
    <text evidence="1">Accelerates the degradation of transcripts by removing pyrophosphate from the 5'-end of triphosphorylated RNA, leading to a more labile monophosphorylated state that can stimulate subsequent ribonuclease cleavage.</text>
</comment>
<comment type="cofactor">
    <cofactor evidence="1">
        <name>a divalent metal cation</name>
        <dbReference type="ChEBI" id="CHEBI:60240"/>
    </cofactor>
</comment>
<comment type="similarity">
    <text evidence="1">Belongs to the Nudix hydrolase family. RppH subfamily.</text>
</comment>
<comment type="sequence caution" evidence="2">
    <conflict type="erroneous initiation">
        <sequence resource="EMBL-CDS" id="CAJ11800"/>
    </conflict>
</comment>
<reference key="1">
    <citation type="journal article" date="2005" name="Infect. Immun.">
        <title>Whole-genome analyses of speciation events in pathogenic Brucellae.</title>
        <authorList>
            <person name="Chain P.S."/>
            <person name="Comerci D.J."/>
            <person name="Tolmasky M.E."/>
            <person name="Larimer F.W."/>
            <person name="Malfatti S.A."/>
            <person name="Vergez L.M."/>
            <person name="Aguero F."/>
            <person name="Land M.L."/>
            <person name="Ugalde R.A."/>
            <person name="Garcia E."/>
        </authorList>
    </citation>
    <scope>NUCLEOTIDE SEQUENCE [LARGE SCALE GENOMIC DNA]</scope>
    <source>
        <strain>2308</strain>
    </source>
</reference>
<name>RPPH_BRUA2</name>
<feature type="chain" id="PRO_0000231900" description="RNA pyrophosphohydrolase">
    <location>
        <begin position="1"/>
        <end position="178"/>
    </location>
</feature>
<feature type="domain" description="Nudix hydrolase" evidence="1">
    <location>
        <begin position="18"/>
        <end position="171"/>
    </location>
</feature>
<feature type="short sequence motif" description="Nudix box">
    <location>
        <begin position="59"/>
        <end position="80"/>
    </location>
</feature>
<keyword id="KW-0378">Hydrolase</keyword>
<keyword id="KW-1185">Reference proteome</keyword>
<accession>Q2YLJ4</accession>
<sequence>MSEHKGPTGAMVDPESLPYRPCVGLMVLNKAGLVWAGRRIVIPGDEMDGATQLWQMPQGGIDKGEDPAQAALRELYEETGMTSVSLLEEASDWINYDLPPHLMGLALKGKYRGQTQKWFAYRFEGDESEIAINPPPGGHTAEFDCWEWKPMADLPNLIVPFKRKVYEQVVATFRHLAA</sequence>
<dbReference type="EC" id="3.6.1.-" evidence="1"/>
<dbReference type="EMBL" id="AM040264">
    <property type="protein sequence ID" value="CAJ11800.1"/>
    <property type="status" value="ALT_INIT"/>
    <property type="molecule type" value="Genomic_DNA"/>
</dbReference>
<dbReference type="RefSeq" id="WP_002964914.1">
    <property type="nucleotide sequence ID" value="NZ_KN046823.1"/>
</dbReference>
<dbReference type="SMR" id="Q2YLJ4"/>
<dbReference type="STRING" id="359391.BAB1_1844"/>
<dbReference type="KEGG" id="bmf:BAB1_1844"/>
<dbReference type="PATRIC" id="fig|359391.11.peg.357"/>
<dbReference type="HOGENOM" id="CLU_087195_3_0_5"/>
<dbReference type="PhylomeDB" id="Q2YLJ4"/>
<dbReference type="Proteomes" id="UP000002719">
    <property type="component" value="Chromosome I"/>
</dbReference>
<dbReference type="GO" id="GO:0034432">
    <property type="term" value="F:bis(5'-adenosyl)-pentaphosphatase activity"/>
    <property type="evidence" value="ECO:0007669"/>
    <property type="project" value="TreeGrafter"/>
</dbReference>
<dbReference type="GO" id="GO:0008893">
    <property type="term" value="F:guanosine-3',5'-bis(diphosphate) 3'-diphosphatase activity"/>
    <property type="evidence" value="ECO:0007669"/>
    <property type="project" value="TreeGrafter"/>
</dbReference>
<dbReference type="GO" id="GO:0006753">
    <property type="term" value="P:nucleoside phosphate metabolic process"/>
    <property type="evidence" value="ECO:0007669"/>
    <property type="project" value="TreeGrafter"/>
</dbReference>
<dbReference type="GO" id="GO:0019693">
    <property type="term" value="P:ribose phosphate metabolic process"/>
    <property type="evidence" value="ECO:0007669"/>
    <property type="project" value="TreeGrafter"/>
</dbReference>
<dbReference type="CDD" id="cd03671">
    <property type="entry name" value="NUDIX_Ap4A_hydrolase_plant_like"/>
    <property type="match status" value="1"/>
</dbReference>
<dbReference type="Gene3D" id="3.90.79.10">
    <property type="entry name" value="Nucleoside Triphosphate Pyrophosphohydrolase"/>
    <property type="match status" value="1"/>
</dbReference>
<dbReference type="HAMAP" id="MF_00298">
    <property type="entry name" value="Nudix_RppH"/>
    <property type="match status" value="1"/>
</dbReference>
<dbReference type="InterPro" id="IPR020476">
    <property type="entry name" value="Nudix_hydrolase"/>
</dbReference>
<dbReference type="InterPro" id="IPR015797">
    <property type="entry name" value="NUDIX_hydrolase-like_dom_sf"/>
</dbReference>
<dbReference type="InterPro" id="IPR020084">
    <property type="entry name" value="NUDIX_hydrolase_CS"/>
</dbReference>
<dbReference type="InterPro" id="IPR000086">
    <property type="entry name" value="NUDIX_hydrolase_dom"/>
</dbReference>
<dbReference type="InterPro" id="IPR022927">
    <property type="entry name" value="RppH"/>
</dbReference>
<dbReference type="NCBIfam" id="NF001938">
    <property type="entry name" value="PRK00714.1-5"/>
    <property type="match status" value="1"/>
</dbReference>
<dbReference type="PANTHER" id="PTHR11839:SF22">
    <property type="entry name" value="NUDIX HYDROLASE 26, CHLOROPLASTIC"/>
    <property type="match status" value="1"/>
</dbReference>
<dbReference type="PANTHER" id="PTHR11839">
    <property type="entry name" value="UDP/ADP-SUGAR PYROPHOSPHATASE"/>
    <property type="match status" value="1"/>
</dbReference>
<dbReference type="Pfam" id="PF00293">
    <property type="entry name" value="NUDIX"/>
    <property type="match status" value="1"/>
</dbReference>
<dbReference type="PRINTS" id="PR00502">
    <property type="entry name" value="NUDIXFAMILY"/>
</dbReference>
<dbReference type="SUPFAM" id="SSF55811">
    <property type="entry name" value="Nudix"/>
    <property type="match status" value="1"/>
</dbReference>
<dbReference type="PROSITE" id="PS51462">
    <property type="entry name" value="NUDIX"/>
    <property type="match status" value="1"/>
</dbReference>
<dbReference type="PROSITE" id="PS00893">
    <property type="entry name" value="NUDIX_BOX"/>
    <property type="match status" value="1"/>
</dbReference>
<evidence type="ECO:0000255" key="1">
    <source>
        <dbReference type="HAMAP-Rule" id="MF_00298"/>
    </source>
</evidence>
<evidence type="ECO:0000305" key="2"/>
<protein>
    <recommendedName>
        <fullName evidence="1">RNA pyrophosphohydrolase</fullName>
        <ecNumber evidence="1">3.6.1.-</ecNumber>
    </recommendedName>
    <alternativeName>
        <fullName evidence="1">(Di)nucleoside polyphosphate hydrolase</fullName>
    </alternativeName>
</protein>
<gene>
    <name evidence="1" type="primary">rppH</name>
    <name evidence="1" type="synonym">nudH</name>
    <name type="ordered locus">BAB1_1844</name>
</gene>